<reference key="1">
    <citation type="submission" date="2003-10" db="EMBL/GenBank/DDBJ databases">
        <title>The complete genome sequence of the alkaliphilic Bacillus clausii KSM-K16.</title>
        <authorList>
            <person name="Takaki Y."/>
            <person name="Kageyama Y."/>
            <person name="Shimamura S."/>
            <person name="Suzuki H."/>
            <person name="Nishi S."/>
            <person name="Hatada Y."/>
            <person name="Kawai S."/>
            <person name="Ito S."/>
            <person name="Horikoshi K."/>
        </authorList>
    </citation>
    <scope>NUCLEOTIDE SEQUENCE [LARGE SCALE GENOMIC DNA]</scope>
    <source>
        <strain>KSM-K16</strain>
    </source>
</reference>
<accession>Q5WEN3</accession>
<dbReference type="EC" id="2.3.3.13" evidence="1"/>
<dbReference type="EMBL" id="AP006627">
    <property type="protein sequence ID" value="BAD65177.1"/>
    <property type="molecule type" value="Genomic_DNA"/>
</dbReference>
<dbReference type="RefSeq" id="WP_011247485.1">
    <property type="nucleotide sequence ID" value="NC_006582.1"/>
</dbReference>
<dbReference type="SMR" id="Q5WEN3"/>
<dbReference type="STRING" id="66692.ABC2642"/>
<dbReference type="KEGG" id="bcl:ABC2642"/>
<dbReference type="eggNOG" id="COG0119">
    <property type="taxonomic scope" value="Bacteria"/>
</dbReference>
<dbReference type="HOGENOM" id="CLU_022158_0_1_9"/>
<dbReference type="OrthoDB" id="9804858at2"/>
<dbReference type="UniPathway" id="UPA00048">
    <property type="reaction ID" value="UER00070"/>
</dbReference>
<dbReference type="Proteomes" id="UP000001168">
    <property type="component" value="Chromosome"/>
</dbReference>
<dbReference type="GO" id="GO:0005737">
    <property type="term" value="C:cytoplasm"/>
    <property type="evidence" value="ECO:0007669"/>
    <property type="project" value="UniProtKB-SubCell"/>
</dbReference>
<dbReference type="GO" id="GO:0003852">
    <property type="term" value="F:2-isopropylmalate synthase activity"/>
    <property type="evidence" value="ECO:0007669"/>
    <property type="project" value="UniProtKB-UniRule"/>
</dbReference>
<dbReference type="GO" id="GO:0003985">
    <property type="term" value="F:acetyl-CoA C-acetyltransferase activity"/>
    <property type="evidence" value="ECO:0007669"/>
    <property type="project" value="UniProtKB-UniRule"/>
</dbReference>
<dbReference type="GO" id="GO:0030145">
    <property type="term" value="F:manganese ion binding"/>
    <property type="evidence" value="ECO:0007669"/>
    <property type="project" value="UniProtKB-UniRule"/>
</dbReference>
<dbReference type="GO" id="GO:0009098">
    <property type="term" value="P:L-leucine biosynthetic process"/>
    <property type="evidence" value="ECO:0007669"/>
    <property type="project" value="UniProtKB-UniRule"/>
</dbReference>
<dbReference type="CDD" id="cd07940">
    <property type="entry name" value="DRE_TIM_IPMS"/>
    <property type="match status" value="1"/>
</dbReference>
<dbReference type="FunFam" id="1.10.238.260:FF:000001">
    <property type="entry name" value="2-isopropylmalate synthase"/>
    <property type="match status" value="1"/>
</dbReference>
<dbReference type="FunFam" id="3.20.20.70:FF:000010">
    <property type="entry name" value="2-isopropylmalate synthase"/>
    <property type="match status" value="1"/>
</dbReference>
<dbReference type="FunFam" id="3.30.160.270:FF:000003">
    <property type="entry name" value="2-isopropylmalate synthase"/>
    <property type="match status" value="1"/>
</dbReference>
<dbReference type="Gene3D" id="1.10.238.260">
    <property type="match status" value="1"/>
</dbReference>
<dbReference type="Gene3D" id="3.30.160.270">
    <property type="match status" value="1"/>
</dbReference>
<dbReference type="Gene3D" id="3.20.20.70">
    <property type="entry name" value="Aldolase class I"/>
    <property type="match status" value="1"/>
</dbReference>
<dbReference type="HAMAP" id="MF_01025">
    <property type="entry name" value="LeuA_type1"/>
    <property type="match status" value="1"/>
</dbReference>
<dbReference type="InterPro" id="IPR050073">
    <property type="entry name" value="2-IPM_HCS-like"/>
</dbReference>
<dbReference type="InterPro" id="IPR013709">
    <property type="entry name" value="2-isopropylmalate_synth_dimer"/>
</dbReference>
<dbReference type="InterPro" id="IPR002034">
    <property type="entry name" value="AIPM/Hcit_synth_CS"/>
</dbReference>
<dbReference type="InterPro" id="IPR013785">
    <property type="entry name" value="Aldolase_TIM"/>
</dbReference>
<dbReference type="InterPro" id="IPR054691">
    <property type="entry name" value="LeuA/HCS_post-cat"/>
</dbReference>
<dbReference type="InterPro" id="IPR036230">
    <property type="entry name" value="LeuA_allosteric_dom_sf"/>
</dbReference>
<dbReference type="InterPro" id="IPR005671">
    <property type="entry name" value="LeuA_bact_synth"/>
</dbReference>
<dbReference type="InterPro" id="IPR000891">
    <property type="entry name" value="PYR_CT"/>
</dbReference>
<dbReference type="NCBIfam" id="TIGR00973">
    <property type="entry name" value="leuA_bact"/>
    <property type="match status" value="1"/>
</dbReference>
<dbReference type="NCBIfam" id="NF002086">
    <property type="entry name" value="PRK00915.1-3"/>
    <property type="match status" value="1"/>
</dbReference>
<dbReference type="NCBIfam" id="NF002088">
    <property type="entry name" value="PRK00915.1-5"/>
    <property type="match status" value="1"/>
</dbReference>
<dbReference type="PANTHER" id="PTHR10277:SF9">
    <property type="entry name" value="2-ISOPROPYLMALATE SYNTHASE 1, CHLOROPLASTIC-RELATED"/>
    <property type="match status" value="1"/>
</dbReference>
<dbReference type="PANTHER" id="PTHR10277">
    <property type="entry name" value="HOMOCITRATE SYNTHASE-RELATED"/>
    <property type="match status" value="1"/>
</dbReference>
<dbReference type="Pfam" id="PF22617">
    <property type="entry name" value="HCS_D2"/>
    <property type="match status" value="1"/>
</dbReference>
<dbReference type="Pfam" id="PF00682">
    <property type="entry name" value="HMGL-like"/>
    <property type="match status" value="1"/>
</dbReference>
<dbReference type="Pfam" id="PF08502">
    <property type="entry name" value="LeuA_dimer"/>
    <property type="match status" value="1"/>
</dbReference>
<dbReference type="SMART" id="SM00917">
    <property type="entry name" value="LeuA_dimer"/>
    <property type="match status" value="1"/>
</dbReference>
<dbReference type="SUPFAM" id="SSF110921">
    <property type="entry name" value="2-isopropylmalate synthase LeuA, allosteric (dimerisation) domain"/>
    <property type="match status" value="1"/>
</dbReference>
<dbReference type="SUPFAM" id="SSF51569">
    <property type="entry name" value="Aldolase"/>
    <property type="match status" value="1"/>
</dbReference>
<dbReference type="PROSITE" id="PS00815">
    <property type="entry name" value="AIPM_HOMOCIT_SYNTH_1"/>
    <property type="match status" value="1"/>
</dbReference>
<dbReference type="PROSITE" id="PS00816">
    <property type="entry name" value="AIPM_HOMOCIT_SYNTH_2"/>
    <property type="match status" value="1"/>
</dbReference>
<dbReference type="PROSITE" id="PS50991">
    <property type="entry name" value="PYR_CT"/>
    <property type="match status" value="1"/>
</dbReference>
<keyword id="KW-0028">Amino-acid biosynthesis</keyword>
<keyword id="KW-0100">Branched-chain amino acid biosynthesis</keyword>
<keyword id="KW-0963">Cytoplasm</keyword>
<keyword id="KW-0432">Leucine biosynthesis</keyword>
<keyword id="KW-0464">Manganese</keyword>
<keyword id="KW-0479">Metal-binding</keyword>
<keyword id="KW-1185">Reference proteome</keyword>
<keyword id="KW-0808">Transferase</keyword>
<comment type="function">
    <text evidence="1">Catalyzes the condensation of the acetyl group of acetyl-CoA with 3-methyl-2-oxobutanoate (2-ketoisovalerate) to form 3-carboxy-3-hydroxy-4-methylpentanoate (2-isopropylmalate).</text>
</comment>
<comment type="catalytic activity">
    <reaction evidence="1">
        <text>3-methyl-2-oxobutanoate + acetyl-CoA + H2O = (2S)-2-isopropylmalate + CoA + H(+)</text>
        <dbReference type="Rhea" id="RHEA:21524"/>
        <dbReference type="ChEBI" id="CHEBI:1178"/>
        <dbReference type="ChEBI" id="CHEBI:11851"/>
        <dbReference type="ChEBI" id="CHEBI:15377"/>
        <dbReference type="ChEBI" id="CHEBI:15378"/>
        <dbReference type="ChEBI" id="CHEBI:57287"/>
        <dbReference type="ChEBI" id="CHEBI:57288"/>
        <dbReference type="EC" id="2.3.3.13"/>
    </reaction>
</comment>
<comment type="cofactor">
    <cofactor evidence="1">
        <name>Mn(2+)</name>
        <dbReference type="ChEBI" id="CHEBI:29035"/>
    </cofactor>
</comment>
<comment type="pathway">
    <text evidence="1">Amino-acid biosynthesis; L-leucine biosynthesis; L-leucine from 3-methyl-2-oxobutanoate: step 1/4.</text>
</comment>
<comment type="subunit">
    <text evidence="1">Homodimer.</text>
</comment>
<comment type="subcellular location">
    <subcellularLocation>
        <location evidence="1">Cytoplasm</location>
    </subcellularLocation>
</comment>
<comment type="similarity">
    <text evidence="1">Belongs to the alpha-IPM synthase/homocitrate synthase family. LeuA type 1 subfamily.</text>
</comment>
<sequence length="514" mass="55925">MRKINVFDTSLRDGEQMPGIALTVKEKLEIARQLERLGVDIIEAGFPASSPGDFQAVKEIAETVKGSSITGLARAKKSDIDSAWEALKSSAEPRVHVFLATSPIHMEHKLKLTPDQVVERAVESVRYAAEKFPHVQFSAEDANRSEWPFLKRIIEAAIDAGASVINLPDTVGYRTPEEISKLFEFVTENVKNIDRAILSTHNHDDLGMGVANSLAAISAGAGQVECTINGIGERAGNAALEEIAVALQIRSDYYQAKTGLKLSELKRTSALVSRLTSMNVPGNKAVVGANAFAHESGIHQDGMLKNKETYEIITPELVGATSSLPLGKHSGRHAFKTKLNELGFSGSDEKLQTIFSAFKQLCDKKKEVTEDDLYALIADATDDQDSTAYELTALQVTYGMNHVPTATIRLKKQDDREIEEAGTGSGSVEAIYNTLAKMTGGNYSLADYRIQSVNGGEDALAEVHVRIQADDFEQSGRGVAHDVLEASAKAYLHAVNRVIARKHYAKREMAKVES</sequence>
<gene>
    <name evidence="1" type="primary">leuA</name>
    <name type="ordered locus">ABC2642</name>
</gene>
<proteinExistence type="inferred from homology"/>
<name>LEU1_SHOC1</name>
<evidence type="ECO:0000255" key="1">
    <source>
        <dbReference type="HAMAP-Rule" id="MF_01025"/>
    </source>
</evidence>
<protein>
    <recommendedName>
        <fullName evidence="1">2-isopropylmalate synthase</fullName>
        <ecNumber evidence="1">2.3.3.13</ecNumber>
    </recommendedName>
    <alternativeName>
        <fullName evidence="1">Alpha-IPM synthase</fullName>
    </alternativeName>
    <alternativeName>
        <fullName evidence="1">Alpha-isopropylmalate synthase</fullName>
    </alternativeName>
</protein>
<feature type="chain" id="PRO_1000149138" description="2-isopropylmalate synthase">
    <location>
        <begin position="1"/>
        <end position="514"/>
    </location>
</feature>
<feature type="domain" description="Pyruvate carboxyltransferase" evidence="1">
    <location>
        <begin position="4"/>
        <end position="266"/>
    </location>
</feature>
<feature type="region of interest" description="Regulatory domain" evidence="1">
    <location>
        <begin position="390"/>
        <end position="514"/>
    </location>
</feature>
<feature type="binding site" evidence="1">
    <location>
        <position position="13"/>
    </location>
    <ligand>
        <name>Mn(2+)</name>
        <dbReference type="ChEBI" id="CHEBI:29035"/>
    </ligand>
</feature>
<feature type="binding site" evidence="1">
    <location>
        <position position="201"/>
    </location>
    <ligand>
        <name>Mn(2+)</name>
        <dbReference type="ChEBI" id="CHEBI:29035"/>
    </ligand>
</feature>
<feature type="binding site" evidence="1">
    <location>
        <position position="203"/>
    </location>
    <ligand>
        <name>Mn(2+)</name>
        <dbReference type="ChEBI" id="CHEBI:29035"/>
    </ligand>
</feature>
<feature type="binding site" evidence="1">
    <location>
        <position position="237"/>
    </location>
    <ligand>
        <name>Mn(2+)</name>
        <dbReference type="ChEBI" id="CHEBI:29035"/>
    </ligand>
</feature>
<organism>
    <name type="scientific">Shouchella clausii (strain KSM-K16)</name>
    <name type="common">Alkalihalobacillus clausii</name>
    <dbReference type="NCBI Taxonomy" id="66692"/>
    <lineage>
        <taxon>Bacteria</taxon>
        <taxon>Bacillati</taxon>
        <taxon>Bacillota</taxon>
        <taxon>Bacilli</taxon>
        <taxon>Bacillales</taxon>
        <taxon>Bacillaceae</taxon>
        <taxon>Shouchella</taxon>
    </lineage>
</organism>